<proteinExistence type="inferred from homology"/>
<name>RS8_ECOL6</name>
<gene>
    <name type="primary">rpsH</name>
    <name type="ordered locus">c4070</name>
</gene>
<keyword id="KW-1185">Reference proteome</keyword>
<keyword id="KW-0687">Ribonucleoprotein</keyword>
<keyword id="KW-0689">Ribosomal protein</keyword>
<keyword id="KW-0694">RNA-binding</keyword>
<keyword id="KW-0699">rRNA-binding</keyword>
<comment type="function">
    <text evidence="1">One of the primary rRNA binding proteins, it binds directly to 16S rRNA central domain where it helps coordinate assembly of the platform of the 30S subunit.</text>
</comment>
<comment type="subunit">
    <text evidence="1">Part of the 30S ribosomal subunit. Contacts proteins S5 and S12 (By similarity).</text>
</comment>
<comment type="similarity">
    <text evidence="2">Belongs to the universal ribosomal protein uS8 family.</text>
</comment>
<dbReference type="EMBL" id="AE014075">
    <property type="protein sequence ID" value="AAN82508.1"/>
    <property type="molecule type" value="Genomic_DNA"/>
</dbReference>
<dbReference type="RefSeq" id="WP_000062611.1">
    <property type="nucleotide sequence ID" value="NZ_CP051263.1"/>
</dbReference>
<dbReference type="SMR" id="P0A7W8"/>
<dbReference type="STRING" id="199310.c4070"/>
<dbReference type="GeneID" id="93778681"/>
<dbReference type="KEGG" id="ecc:c4070"/>
<dbReference type="eggNOG" id="COG0096">
    <property type="taxonomic scope" value="Bacteria"/>
</dbReference>
<dbReference type="HOGENOM" id="CLU_098428_0_0_6"/>
<dbReference type="BioCyc" id="ECOL199310:C4070-MONOMER"/>
<dbReference type="Proteomes" id="UP000001410">
    <property type="component" value="Chromosome"/>
</dbReference>
<dbReference type="GO" id="GO:1990904">
    <property type="term" value="C:ribonucleoprotein complex"/>
    <property type="evidence" value="ECO:0007669"/>
    <property type="project" value="UniProtKB-KW"/>
</dbReference>
<dbReference type="GO" id="GO:0005840">
    <property type="term" value="C:ribosome"/>
    <property type="evidence" value="ECO:0007669"/>
    <property type="project" value="UniProtKB-KW"/>
</dbReference>
<dbReference type="GO" id="GO:0019843">
    <property type="term" value="F:rRNA binding"/>
    <property type="evidence" value="ECO:0007669"/>
    <property type="project" value="UniProtKB-UniRule"/>
</dbReference>
<dbReference type="GO" id="GO:0003735">
    <property type="term" value="F:structural constituent of ribosome"/>
    <property type="evidence" value="ECO:0007669"/>
    <property type="project" value="InterPro"/>
</dbReference>
<dbReference type="GO" id="GO:0006412">
    <property type="term" value="P:translation"/>
    <property type="evidence" value="ECO:0007669"/>
    <property type="project" value="UniProtKB-UniRule"/>
</dbReference>
<dbReference type="FunFam" id="3.30.1370.30:FF:000003">
    <property type="entry name" value="30S ribosomal protein S8"/>
    <property type="match status" value="1"/>
</dbReference>
<dbReference type="FunFam" id="3.30.1490.10:FF:000001">
    <property type="entry name" value="30S ribosomal protein S8"/>
    <property type="match status" value="1"/>
</dbReference>
<dbReference type="Gene3D" id="3.30.1370.30">
    <property type="match status" value="1"/>
</dbReference>
<dbReference type="Gene3D" id="3.30.1490.10">
    <property type="match status" value="1"/>
</dbReference>
<dbReference type="HAMAP" id="MF_01302_B">
    <property type="entry name" value="Ribosomal_uS8_B"/>
    <property type="match status" value="1"/>
</dbReference>
<dbReference type="InterPro" id="IPR000630">
    <property type="entry name" value="Ribosomal_uS8"/>
</dbReference>
<dbReference type="InterPro" id="IPR047863">
    <property type="entry name" value="Ribosomal_uS8_CS"/>
</dbReference>
<dbReference type="InterPro" id="IPR035987">
    <property type="entry name" value="Ribosomal_uS8_sf"/>
</dbReference>
<dbReference type="NCBIfam" id="NF001109">
    <property type="entry name" value="PRK00136.1"/>
    <property type="match status" value="1"/>
</dbReference>
<dbReference type="PANTHER" id="PTHR11758">
    <property type="entry name" value="40S RIBOSOMAL PROTEIN S15A"/>
    <property type="match status" value="1"/>
</dbReference>
<dbReference type="Pfam" id="PF00410">
    <property type="entry name" value="Ribosomal_S8"/>
    <property type="match status" value="1"/>
</dbReference>
<dbReference type="SUPFAM" id="SSF56047">
    <property type="entry name" value="Ribosomal protein S8"/>
    <property type="match status" value="1"/>
</dbReference>
<dbReference type="PROSITE" id="PS00053">
    <property type="entry name" value="RIBOSOMAL_S8"/>
    <property type="match status" value="1"/>
</dbReference>
<sequence length="130" mass="14127">MSMQDPIADMLTRIRNGQAANKAAVTMPSSKLKVAIANVLKEEGFIEDFKVEGDTKPELELTLKYFQGKAVVESIQRVSRPGLRIYKRKDELPKVMAGLGIAVVSTSKGVMTDRAARQAGLGGEIICYVA</sequence>
<reference key="1">
    <citation type="journal article" date="2002" name="Proc. Natl. Acad. Sci. U.S.A.">
        <title>Extensive mosaic structure revealed by the complete genome sequence of uropathogenic Escherichia coli.</title>
        <authorList>
            <person name="Welch R.A."/>
            <person name="Burland V."/>
            <person name="Plunkett G. III"/>
            <person name="Redford P."/>
            <person name="Roesch P."/>
            <person name="Rasko D."/>
            <person name="Buckles E.L."/>
            <person name="Liou S.-R."/>
            <person name="Boutin A."/>
            <person name="Hackett J."/>
            <person name="Stroud D."/>
            <person name="Mayhew G.F."/>
            <person name="Rose D.J."/>
            <person name="Zhou S."/>
            <person name="Schwartz D.C."/>
            <person name="Perna N.T."/>
            <person name="Mobley H.L.T."/>
            <person name="Donnenberg M.S."/>
            <person name="Blattner F.R."/>
        </authorList>
    </citation>
    <scope>NUCLEOTIDE SEQUENCE [LARGE SCALE GENOMIC DNA]</scope>
    <source>
        <strain>CFT073 / ATCC 700928 / UPEC</strain>
    </source>
</reference>
<organism>
    <name type="scientific">Escherichia coli O6:H1 (strain CFT073 / ATCC 700928 / UPEC)</name>
    <dbReference type="NCBI Taxonomy" id="199310"/>
    <lineage>
        <taxon>Bacteria</taxon>
        <taxon>Pseudomonadati</taxon>
        <taxon>Pseudomonadota</taxon>
        <taxon>Gammaproteobacteria</taxon>
        <taxon>Enterobacterales</taxon>
        <taxon>Enterobacteriaceae</taxon>
        <taxon>Escherichia</taxon>
    </lineage>
</organism>
<protein>
    <recommendedName>
        <fullName evidence="2">Small ribosomal subunit protein uS8</fullName>
    </recommendedName>
    <alternativeName>
        <fullName>30S ribosomal protein S8</fullName>
    </alternativeName>
</protein>
<feature type="initiator methionine" description="Removed" evidence="1">
    <location>
        <position position="1"/>
    </location>
</feature>
<feature type="chain" id="PRO_0000126407" description="Small ribosomal subunit protein uS8">
    <location>
        <begin position="2"/>
        <end position="130"/>
    </location>
</feature>
<accession>P0A7W8</accession>
<accession>P02361</accession>
<evidence type="ECO:0000250" key="1"/>
<evidence type="ECO:0000305" key="2"/>